<dbReference type="EMBL" id="CP000544">
    <property type="protein sequence ID" value="ABM63199.1"/>
    <property type="molecule type" value="Genomic_DNA"/>
</dbReference>
<dbReference type="RefSeq" id="WP_011815221.1">
    <property type="nucleotide sequence ID" value="NC_008789.1"/>
</dbReference>
<dbReference type="SMR" id="A1WZT7"/>
<dbReference type="STRING" id="349124.Hhal_2436"/>
<dbReference type="KEGG" id="hha:Hhal_2436"/>
<dbReference type="eggNOG" id="COG0356">
    <property type="taxonomic scope" value="Bacteria"/>
</dbReference>
<dbReference type="HOGENOM" id="CLU_041018_1_0_6"/>
<dbReference type="OrthoDB" id="9789241at2"/>
<dbReference type="Proteomes" id="UP000000647">
    <property type="component" value="Chromosome"/>
</dbReference>
<dbReference type="GO" id="GO:0005886">
    <property type="term" value="C:plasma membrane"/>
    <property type="evidence" value="ECO:0007669"/>
    <property type="project" value="UniProtKB-SubCell"/>
</dbReference>
<dbReference type="GO" id="GO:0045259">
    <property type="term" value="C:proton-transporting ATP synthase complex"/>
    <property type="evidence" value="ECO:0007669"/>
    <property type="project" value="UniProtKB-KW"/>
</dbReference>
<dbReference type="GO" id="GO:0046933">
    <property type="term" value="F:proton-transporting ATP synthase activity, rotational mechanism"/>
    <property type="evidence" value="ECO:0007669"/>
    <property type="project" value="UniProtKB-UniRule"/>
</dbReference>
<dbReference type="GO" id="GO:0042777">
    <property type="term" value="P:proton motive force-driven plasma membrane ATP synthesis"/>
    <property type="evidence" value="ECO:0007669"/>
    <property type="project" value="TreeGrafter"/>
</dbReference>
<dbReference type="CDD" id="cd00310">
    <property type="entry name" value="ATP-synt_Fo_a_6"/>
    <property type="match status" value="1"/>
</dbReference>
<dbReference type="FunFam" id="1.20.120.220:FF:000002">
    <property type="entry name" value="ATP synthase subunit a"/>
    <property type="match status" value="1"/>
</dbReference>
<dbReference type="Gene3D" id="1.20.120.220">
    <property type="entry name" value="ATP synthase, F0 complex, subunit A"/>
    <property type="match status" value="1"/>
</dbReference>
<dbReference type="HAMAP" id="MF_01393">
    <property type="entry name" value="ATP_synth_a_bact"/>
    <property type="match status" value="1"/>
</dbReference>
<dbReference type="InterPro" id="IPR045082">
    <property type="entry name" value="ATP_syn_F0_a_bact/chloroplast"/>
</dbReference>
<dbReference type="InterPro" id="IPR000568">
    <property type="entry name" value="ATP_synth_F0_asu"/>
</dbReference>
<dbReference type="InterPro" id="IPR023011">
    <property type="entry name" value="ATP_synth_F0_asu_AS"/>
</dbReference>
<dbReference type="InterPro" id="IPR035908">
    <property type="entry name" value="F0_ATP_A_sf"/>
</dbReference>
<dbReference type="NCBIfam" id="TIGR01131">
    <property type="entry name" value="ATP_synt_6_or_A"/>
    <property type="match status" value="1"/>
</dbReference>
<dbReference type="NCBIfam" id="NF004477">
    <property type="entry name" value="PRK05815.1-1"/>
    <property type="match status" value="1"/>
</dbReference>
<dbReference type="PANTHER" id="PTHR42823">
    <property type="entry name" value="ATP SYNTHASE SUBUNIT A, CHLOROPLASTIC"/>
    <property type="match status" value="1"/>
</dbReference>
<dbReference type="PANTHER" id="PTHR42823:SF3">
    <property type="entry name" value="ATP SYNTHASE SUBUNIT A, CHLOROPLASTIC"/>
    <property type="match status" value="1"/>
</dbReference>
<dbReference type="Pfam" id="PF00119">
    <property type="entry name" value="ATP-synt_A"/>
    <property type="match status" value="1"/>
</dbReference>
<dbReference type="PRINTS" id="PR00123">
    <property type="entry name" value="ATPASEA"/>
</dbReference>
<dbReference type="SUPFAM" id="SSF81336">
    <property type="entry name" value="F1F0 ATP synthase subunit A"/>
    <property type="match status" value="1"/>
</dbReference>
<dbReference type="PROSITE" id="PS00449">
    <property type="entry name" value="ATPASE_A"/>
    <property type="match status" value="1"/>
</dbReference>
<accession>A1WZT7</accession>
<name>ATP6_HALHL</name>
<gene>
    <name evidence="1" type="primary">atpB</name>
    <name type="ordered locus">Hhal_2436</name>
</gene>
<keyword id="KW-0066">ATP synthesis</keyword>
<keyword id="KW-0997">Cell inner membrane</keyword>
<keyword id="KW-1003">Cell membrane</keyword>
<keyword id="KW-0138">CF(0)</keyword>
<keyword id="KW-0375">Hydrogen ion transport</keyword>
<keyword id="KW-0406">Ion transport</keyword>
<keyword id="KW-0472">Membrane</keyword>
<keyword id="KW-1185">Reference proteome</keyword>
<keyword id="KW-0812">Transmembrane</keyword>
<keyword id="KW-1133">Transmembrane helix</keyword>
<keyword id="KW-0813">Transport</keyword>
<reference key="1">
    <citation type="submission" date="2006-12" db="EMBL/GenBank/DDBJ databases">
        <title>Complete sequence of Halorhodospira halophila SL1.</title>
        <authorList>
            <consortium name="US DOE Joint Genome Institute"/>
            <person name="Copeland A."/>
            <person name="Lucas S."/>
            <person name="Lapidus A."/>
            <person name="Barry K."/>
            <person name="Detter J.C."/>
            <person name="Glavina del Rio T."/>
            <person name="Hammon N."/>
            <person name="Israni S."/>
            <person name="Dalin E."/>
            <person name="Tice H."/>
            <person name="Pitluck S."/>
            <person name="Saunders E."/>
            <person name="Brettin T."/>
            <person name="Bruce D."/>
            <person name="Han C."/>
            <person name="Tapia R."/>
            <person name="Schmutz J."/>
            <person name="Larimer F."/>
            <person name="Land M."/>
            <person name="Hauser L."/>
            <person name="Kyrpides N."/>
            <person name="Mikhailova N."/>
            <person name="Hoff W."/>
            <person name="Richardson P."/>
        </authorList>
    </citation>
    <scope>NUCLEOTIDE SEQUENCE [LARGE SCALE GENOMIC DNA]</scope>
    <source>
        <strain>DSM 244 / SL1</strain>
    </source>
</reference>
<proteinExistence type="inferred from homology"/>
<protein>
    <recommendedName>
        <fullName evidence="1">ATP synthase subunit a</fullName>
    </recommendedName>
    <alternativeName>
        <fullName evidence="1">ATP synthase F0 sector subunit a</fullName>
    </alternativeName>
    <alternativeName>
        <fullName evidence="1">F-ATPase subunit 6</fullName>
    </alternativeName>
</protein>
<comment type="function">
    <text evidence="1">Key component of the proton channel; it plays a direct role in the translocation of protons across the membrane.</text>
</comment>
<comment type="subunit">
    <text evidence="1">F-type ATPases have 2 components, CF(1) - the catalytic core - and CF(0) - the membrane proton channel. CF(1) has five subunits: alpha(3), beta(3), gamma(1), delta(1), epsilon(1). CF(0) has three main subunits: a(1), b(2) and c(9-12). The alpha and beta chains form an alternating ring which encloses part of the gamma chain. CF(1) is attached to CF(0) by a central stalk formed by the gamma and epsilon chains, while a peripheral stalk is formed by the delta and b chains.</text>
</comment>
<comment type="subcellular location">
    <subcellularLocation>
        <location evidence="1">Cell inner membrane</location>
        <topology evidence="1">Multi-pass membrane protein</topology>
    </subcellularLocation>
</comment>
<comment type="similarity">
    <text evidence="1">Belongs to the ATPase A chain family.</text>
</comment>
<sequence length="266" mass="29757">MSADSEFDATDYIQHHLTNLRLDLTEGTIDSEATGFWTLHIDTLIMSFGLGALFCYVFWLAARQATPGVPGGLQNFVEAMIEFIDKTVKETFHAKSKVIAPLALTIFCWVFLSNLMDLVPIDMVPSIMMAVGVDYWKILPSVDLNFTFGLSLSVLALIIIYGVMGQGVGGWLKSWVTHPLGPWLAPANLILNIVEFIAKPVSLSLRLFGNLYAAELVFILISLLPWWIQWALGTPWAIFHILVVPLQAFIFMMLTVVYLAMAYEEH</sequence>
<organism>
    <name type="scientific">Halorhodospira halophila (strain DSM 244 / SL1)</name>
    <name type="common">Ectothiorhodospira halophila (strain DSM 244 / SL1)</name>
    <dbReference type="NCBI Taxonomy" id="349124"/>
    <lineage>
        <taxon>Bacteria</taxon>
        <taxon>Pseudomonadati</taxon>
        <taxon>Pseudomonadota</taxon>
        <taxon>Gammaproteobacteria</taxon>
        <taxon>Chromatiales</taxon>
        <taxon>Ectothiorhodospiraceae</taxon>
        <taxon>Halorhodospira</taxon>
    </lineage>
</organism>
<evidence type="ECO:0000255" key="1">
    <source>
        <dbReference type="HAMAP-Rule" id="MF_01393"/>
    </source>
</evidence>
<feature type="chain" id="PRO_0000362327" description="ATP synthase subunit a">
    <location>
        <begin position="1"/>
        <end position="266"/>
    </location>
</feature>
<feature type="transmembrane region" description="Helical" evidence="1">
    <location>
        <begin position="41"/>
        <end position="61"/>
    </location>
</feature>
<feature type="transmembrane region" description="Helical" evidence="1">
    <location>
        <begin position="98"/>
        <end position="118"/>
    </location>
</feature>
<feature type="transmembrane region" description="Helical" evidence="1">
    <location>
        <begin position="119"/>
        <end position="139"/>
    </location>
</feature>
<feature type="transmembrane region" description="Helical" evidence="1">
    <location>
        <begin position="152"/>
        <end position="172"/>
    </location>
</feature>
<feature type="transmembrane region" description="Helical" evidence="1">
    <location>
        <begin position="178"/>
        <end position="198"/>
    </location>
</feature>
<feature type="transmembrane region" description="Helical" evidence="1">
    <location>
        <begin position="216"/>
        <end position="236"/>
    </location>
</feature>
<feature type="transmembrane region" description="Helical" evidence="1">
    <location>
        <begin position="237"/>
        <end position="257"/>
    </location>
</feature>